<protein>
    <recommendedName>
        <fullName evidence="1">ATP synthase epsilon chain</fullName>
    </recommendedName>
    <alternativeName>
        <fullName evidence="1">ATP synthase F1 sector epsilon subunit</fullName>
    </alternativeName>
    <alternativeName>
        <fullName evidence="1">F-ATPase epsilon subunit</fullName>
    </alternativeName>
</protein>
<proteinExistence type="inferred from homology"/>
<reference key="1">
    <citation type="submission" date="2008-10" db="EMBL/GenBank/DDBJ databases">
        <title>The complete genome sequence of Helicobacter pylori strain P12.</title>
        <authorList>
            <person name="Fischer W."/>
            <person name="Windhager L."/>
            <person name="Karnholz A."/>
            <person name="Zeiller M."/>
            <person name="Zimmer R."/>
            <person name="Haas R."/>
        </authorList>
    </citation>
    <scope>NUCLEOTIDE SEQUENCE [LARGE SCALE GENOMIC DNA]</scope>
    <source>
        <strain>P12</strain>
    </source>
</reference>
<gene>
    <name evidence="1" type="primary">atpC</name>
    <name type="ordered locus">HPP12_1097</name>
</gene>
<keyword id="KW-0066">ATP synthesis</keyword>
<keyword id="KW-0997">Cell inner membrane</keyword>
<keyword id="KW-1003">Cell membrane</keyword>
<keyword id="KW-0139">CF(1)</keyword>
<keyword id="KW-0375">Hydrogen ion transport</keyword>
<keyword id="KW-0406">Ion transport</keyword>
<keyword id="KW-0472">Membrane</keyword>
<keyword id="KW-0813">Transport</keyword>
<evidence type="ECO:0000255" key="1">
    <source>
        <dbReference type="HAMAP-Rule" id="MF_00530"/>
    </source>
</evidence>
<organism>
    <name type="scientific">Helicobacter pylori (strain P12)</name>
    <dbReference type="NCBI Taxonomy" id="570508"/>
    <lineage>
        <taxon>Bacteria</taxon>
        <taxon>Pseudomonadati</taxon>
        <taxon>Campylobacterota</taxon>
        <taxon>Epsilonproteobacteria</taxon>
        <taxon>Campylobacterales</taxon>
        <taxon>Helicobacteraceae</taxon>
        <taxon>Helicobacter</taxon>
    </lineage>
</organism>
<comment type="function">
    <text evidence="1">Produces ATP from ADP in the presence of a proton gradient across the membrane.</text>
</comment>
<comment type="subunit">
    <text evidence="1">F-type ATPases have 2 components, CF(1) - the catalytic core - and CF(0) - the membrane proton channel. CF(1) has five subunits: alpha(3), beta(3), gamma(1), delta(1), epsilon(1). CF(0) has three main subunits: a, b and c.</text>
</comment>
<comment type="subcellular location">
    <subcellularLocation>
        <location evidence="1">Cell inner membrane</location>
        <topology evidence="1">Peripheral membrane protein</topology>
    </subcellularLocation>
</comment>
<comment type="similarity">
    <text evidence="1">Belongs to the ATPase epsilon chain family.</text>
</comment>
<dbReference type="EMBL" id="CP001217">
    <property type="protein sequence ID" value="ACJ08249.1"/>
    <property type="molecule type" value="Genomic_DNA"/>
</dbReference>
<dbReference type="SMR" id="B6JMX1"/>
<dbReference type="KEGG" id="hpp:HPP12_1097"/>
<dbReference type="HOGENOM" id="CLU_084338_2_1_7"/>
<dbReference type="Proteomes" id="UP000008198">
    <property type="component" value="Chromosome"/>
</dbReference>
<dbReference type="GO" id="GO:0005886">
    <property type="term" value="C:plasma membrane"/>
    <property type="evidence" value="ECO:0007669"/>
    <property type="project" value="UniProtKB-SubCell"/>
</dbReference>
<dbReference type="GO" id="GO:0045259">
    <property type="term" value="C:proton-transporting ATP synthase complex"/>
    <property type="evidence" value="ECO:0007669"/>
    <property type="project" value="UniProtKB-KW"/>
</dbReference>
<dbReference type="GO" id="GO:0005524">
    <property type="term" value="F:ATP binding"/>
    <property type="evidence" value="ECO:0007669"/>
    <property type="project" value="UniProtKB-UniRule"/>
</dbReference>
<dbReference type="GO" id="GO:0046933">
    <property type="term" value="F:proton-transporting ATP synthase activity, rotational mechanism"/>
    <property type="evidence" value="ECO:0007669"/>
    <property type="project" value="UniProtKB-UniRule"/>
</dbReference>
<dbReference type="CDD" id="cd12152">
    <property type="entry name" value="F1-ATPase_delta"/>
    <property type="match status" value="1"/>
</dbReference>
<dbReference type="FunFam" id="2.60.15.10:FF:000006">
    <property type="entry name" value="ATP synthase epsilon chain"/>
    <property type="match status" value="1"/>
</dbReference>
<dbReference type="Gene3D" id="2.60.15.10">
    <property type="entry name" value="F0F1 ATP synthase delta/epsilon subunit, N-terminal"/>
    <property type="match status" value="1"/>
</dbReference>
<dbReference type="HAMAP" id="MF_00530">
    <property type="entry name" value="ATP_synth_epsil_bac"/>
    <property type="match status" value="1"/>
</dbReference>
<dbReference type="InterPro" id="IPR001469">
    <property type="entry name" value="ATP_synth_F1_dsu/esu"/>
</dbReference>
<dbReference type="InterPro" id="IPR020546">
    <property type="entry name" value="ATP_synth_F1_dsu/esu_N"/>
</dbReference>
<dbReference type="InterPro" id="IPR036771">
    <property type="entry name" value="ATPsynth_dsu/esu_N"/>
</dbReference>
<dbReference type="NCBIfam" id="TIGR01216">
    <property type="entry name" value="ATP_synt_epsi"/>
    <property type="match status" value="1"/>
</dbReference>
<dbReference type="PANTHER" id="PTHR13822">
    <property type="entry name" value="ATP SYNTHASE DELTA/EPSILON CHAIN"/>
    <property type="match status" value="1"/>
</dbReference>
<dbReference type="PANTHER" id="PTHR13822:SF10">
    <property type="entry name" value="ATP SYNTHASE EPSILON CHAIN, CHLOROPLASTIC"/>
    <property type="match status" value="1"/>
</dbReference>
<dbReference type="Pfam" id="PF02823">
    <property type="entry name" value="ATP-synt_DE_N"/>
    <property type="match status" value="1"/>
</dbReference>
<dbReference type="SUPFAM" id="SSF51344">
    <property type="entry name" value="Epsilon subunit of F1F0-ATP synthase N-terminal domain"/>
    <property type="match status" value="1"/>
</dbReference>
<name>ATPE_HELP2</name>
<accession>B6JMX1</accession>
<sequence length="123" mass="13271">MALLKISVVVPEGEVYTGEVKSVVLPGVEGEFGVLYGHSNMITLLQAGVVEIETENQKEHIAINWGYAEVTNERVDILADGAVFIKKGSDDRDDAISRAKKLLEDASSDRLAVSSVLAKIESL</sequence>
<feature type="chain" id="PRO_1000127863" description="ATP synthase epsilon chain">
    <location>
        <begin position="1"/>
        <end position="123"/>
    </location>
</feature>